<organism>
    <name type="scientific">Allorhizobium ampelinum (strain ATCC BAA-846 / DSM 112012 / S4)</name>
    <name type="common">Agrobacterium vitis (strain S4)</name>
    <dbReference type="NCBI Taxonomy" id="311402"/>
    <lineage>
        <taxon>Bacteria</taxon>
        <taxon>Pseudomonadati</taxon>
        <taxon>Pseudomonadota</taxon>
        <taxon>Alphaproteobacteria</taxon>
        <taxon>Hyphomicrobiales</taxon>
        <taxon>Rhizobiaceae</taxon>
        <taxon>Rhizobium/Agrobacterium group</taxon>
        <taxon>Allorhizobium</taxon>
        <taxon>Allorhizobium ampelinum</taxon>
    </lineage>
</organism>
<name>HSLV_ALLAM</name>
<keyword id="KW-0021">Allosteric enzyme</keyword>
<keyword id="KW-0963">Cytoplasm</keyword>
<keyword id="KW-0378">Hydrolase</keyword>
<keyword id="KW-0479">Metal-binding</keyword>
<keyword id="KW-0645">Protease</keyword>
<keyword id="KW-1185">Reference proteome</keyword>
<keyword id="KW-0915">Sodium</keyword>
<keyword id="KW-0346">Stress response</keyword>
<keyword id="KW-0888">Threonine protease</keyword>
<feature type="chain" id="PRO_1000192663" description="ATP-dependent protease subunit HslV">
    <location>
        <begin position="1"/>
        <end position="186"/>
    </location>
</feature>
<feature type="active site" evidence="1">
    <location>
        <position position="13"/>
    </location>
</feature>
<feature type="binding site" evidence="1">
    <location>
        <position position="167"/>
    </location>
    <ligand>
        <name>Na(+)</name>
        <dbReference type="ChEBI" id="CHEBI:29101"/>
    </ligand>
</feature>
<feature type="binding site" evidence="1">
    <location>
        <position position="170"/>
    </location>
    <ligand>
        <name>Na(+)</name>
        <dbReference type="ChEBI" id="CHEBI:29101"/>
    </ligand>
</feature>
<feature type="binding site" evidence="1">
    <location>
        <position position="173"/>
    </location>
    <ligand>
        <name>Na(+)</name>
        <dbReference type="ChEBI" id="CHEBI:29101"/>
    </ligand>
</feature>
<sequence length="186" mass="19901">MSEHNPYGTMHGTTIITVRKGGMVVMAGDGQVSLGQTVMKGNARKVRRIGKGEVIAGFAGATADAFTLLERLEKKLEQYPGQLMRAAVELAKDWRTDKYLRNLEAMMLVADKTVTLAITGNGDVLEPEHGTIAIGSGGNYALAAALALMDTEKSAEEVARKAMKIAADICVYTNENVLVETLESAN</sequence>
<comment type="function">
    <text evidence="1">Protease subunit of a proteasome-like degradation complex believed to be a general protein degrading machinery.</text>
</comment>
<comment type="catalytic activity">
    <reaction evidence="1">
        <text>ATP-dependent cleavage of peptide bonds with broad specificity.</text>
        <dbReference type="EC" id="3.4.25.2"/>
    </reaction>
</comment>
<comment type="activity regulation">
    <text evidence="1">Allosterically activated by HslU binding.</text>
</comment>
<comment type="subunit">
    <text evidence="1">A double ring-shaped homohexamer of HslV is capped on each side by a ring-shaped HslU homohexamer. The assembly of the HslU/HslV complex is dependent on binding of ATP.</text>
</comment>
<comment type="subcellular location">
    <subcellularLocation>
        <location evidence="1">Cytoplasm</location>
    </subcellularLocation>
</comment>
<comment type="similarity">
    <text evidence="1">Belongs to the peptidase T1B family. HslV subfamily.</text>
</comment>
<protein>
    <recommendedName>
        <fullName evidence="1">ATP-dependent protease subunit HslV</fullName>
        <ecNumber evidence="1">3.4.25.2</ecNumber>
    </recommendedName>
</protein>
<dbReference type="EC" id="3.4.25.2" evidence="1"/>
<dbReference type="EMBL" id="CP000633">
    <property type="protein sequence ID" value="ACM34995.1"/>
    <property type="molecule type" value="Genomic_DNA"/>
</dbReference>
<dbReference type="RefSeq" id="WP_012654525.1">
    <property type="nucleotide sequence ID" value="NC_011989.1"/>
</dbReference>
<dbReference type="SMR" id="B9JXW5"/>
<dbReference type="STRING" id="311402.Avi_0032"/>
<dbReference type="MEROPS" id="T01.006"/>
<dbReference type="KEGG" id="avi:Avi_0032"/>
<dbReference type="eggNOG" id="COG5405">
    <property type="taxonomic scope" value="Bacteria"/>
</dbReference>
<dbReference type="HOGENOM" id="CLU_093872_1_0_5"/>
<dbReference type="Proteomes" id="UP000001596">
    <property type="component" value="Chromosome 1"/>
</dbReference>
<dbReference type="GO" id="GO:0009376">
    <property type="term" value="C:HslUV protease complex"/>
    <property type="evidence" value="ECO:0007669"/>
    <property type="project" value="UniProtKB-UniRule"/>
</dbReference>
<dbReference type="GO" id="GO:0005839">
    <property type="term" value="C:proteasome core complex"/>
    <property type="evidence" value="ECO:0007669"/>
    <property type="project" value="InterPro"/>
</dbReference>
<dbReference type="GO" id="GO:0046872">
    <property type="term" value="F:metal ion binding"/>
    <property type="evidence" value="ECO:0007669"/>
    <property type="project" value="UniProtKB-KW"/>
</dbReference>
<dbReference type="GO" id="GO:0004298">
    <property type="term" value="F:threonine-type endopeptidase activity"/>
    <property type="evidence" value="ECO:0007669"/>
    <property type="project" value="UniProtKB-KW"/>
</dbReference>
<dbReference type="GO" id="GO:0051603">
    <property type="term" value="P:proteolysis involved in protein catabolic process"/>
    <property type="evidence" value="ECO:0007669"/>
    <property type="project" value="InterPro"/>
</dbReference>
<dbReference type="CDD" id="cd01913">
    <property type="entry name" value="protease_HslV"/>
    <property type="match status" value="1"/>
</dbReference>
<dbReference type="FunFam" id="3.60.20.10:FF:000002">
    <property type="entry name" value="ATP-dependent protease subunit HslV"/>
    <property type="match status" value="1"/>
</dbReference>
<dbReference type="Gene3D" id="3.60.20.10">
    <property type="entry name" value="Glutamine Phosphoribosylpyrophosphate, subunit 1, domain 1"/>
    <property type="match status" value="1"/>
</dbReference>
<dbReference type="HAMAP" id="MF_00248">
    <property type="entry name" value="HslV"/>
    <property type="match status" value="1"/>
</dbReference>
<dbReference type="InterPro" id="IPR022281">
    <property type="entry name" value="ATP-dep_Prtase_HsIV_su"/>
</dbReference>
<dbReference type="InterPro" id="IPR029055">
    <property type="entry name" value="Ntn_hydrolases_N"/>
</dbReference>
<dbReference type="InterPro" id="IPR001353">
    <property type="entry name" value="Proteasome_sua/b"/>
</dbReference>
<dbReference type="InterPro" id="IPR023333">
    <property type="entry name" value="Proteasome_suB-type"/>
</dbReference>
<dbReference type="NCBIfam" id="TIGR03692">
    <property type="entry name" value="ATP_dep_HslV"/>
    <property type="match status" value="1"/>
</dbReference>
<dbReference type="NCBIfam" id="NF003964">
    <property type="entry name" value="PRK05456.1"/>
    <property type="match status" value="1"/>
</dbReference>
<dbReference type="PANTHER" id="PTHR32194:SF7">
    <property type="entry name" value="ATP-DEPENDENT PROTEASE SUBUNIT HSLV"/>
    <property type="match status" value="1"/>
</dbReference>
<dbReference type="PANTHER" id="PTHR32194">
    <property type="entry name" value="METALLOPROTEASE TLDD"/>
    <property type="match status" value="1"/>
</dbReference>
<dbReference type="Pfam" id="PF00227">
    <property type="entry name" value="Proteasome"/>
    <property type="match status" value="1"/>
</dbReference>
<dbReference type="PIRSF" id="PIRSF039093">
    <property type="entry name" value="HslV"/>
    <property type="match status" value="1"/>
</dbReference>
<dbReference type="SUPFAM" id="SSF56235">
    <property type="entry name" value="N-terminal nucleophile aminohydrolases (Ntn hydrolases)"/>
    <property type="match status" value="1"/>
</dbReference>
<dbReference type="PROSITE" id="PS51476">
    <property type="entry name" value="PROTEASOME_BETA_2"/>
    <property type="match status" value="1"/>
</dbReference>
<accession>B9JXW5</accession>
<evidence type="ECO:0000255" key="1">
    <source>
        <dbReference type="HAMAP-Rule" id="MF_00248"/>
    </source>
</evidence>
<proteinExistence type="inferred from homology"/>
<reference key="1">
    <citation type="journal article" date="2009" name="J. Bacteriol.">
        <title>Genome sequences of three Agrobacterium biovars help elucidate the evolution of multichromosome genomes in bacteria.</title>
        <authorList>
            <person name="Slater S.C."/>
            <person name="Goldman B.S."/>
            <person name="Goodner B."/>
            <person name="Setubal J.C."/>
            <person name="Farrand S.K."/>
            <person name="Nester E.W."/>
            <person name="Burr T.J."/>
            <person name="Banta L."/>
            <person name="Dickerman A.W."/>
            <person name="Paulsen I."/>
            <person name="Otten L."/>
            <person name="Suen G."/>
            <person name="Welch R."/>
            <person name="Almeida N.F."/>
            <person name="Arnold F."/>
            <person name="Burton O.T."/>
            <person name="Du Z."/>
            <person name="Ewing A."/>
            <person name="Godsy E."/>
            <person name="Heisel S."/>
            <person name="Houmiel K.L."/>
            <person name="Jhaveri J."/>
            <person name="Lu J."/>
            <person name="Miller N.M."/>
            <person name="Norton S."/>
            <person name="Chen Q."/>
            <person name="Phoolcharoen W."/>
            <person name="Ohlin V."/>
            <person name="Ondrusek D."/>
            <person name="Pride N."/>
            <person name="Stricklin S.L."/>
            <person name="Sun J."/>
            <person name="Wheeler C."/>
            <person name="Wilson L."/>
            <person name="Zhu H."/>
            <person name="Wood D.W."/>
        </authorList>
    </citation>
    <scope>NUCLEOTIDE SEQUENCE [LARGE SCALE GENOMIC DNA]</scope>
    <source>
        <strain>ATCC BAA-846 / DSM 112012 / S4</strain>
    </source>
</reference>
<gene>
    <name evidence="1" type="primary">hslV</name>
    <name type="ordered locus">Avi_0032</name>
</gene>